<organism>
    <name type="scientific">Dictyostelium discoideum</name>
    <name type="common">Social amoeba</name>
    <dbReference type="NCBI Taxonomy" id="44689"/>
    <lineage>
        <taxon>Eukaryota</taxon>
        <taxon>Amoebozoa</taxon>
        <taxon>Evosea</taxon>
        <taxon>Eumycetozoa</taxon>
        <taxon>Dictyostelia</taxon>
        <taxon>Dictyosteliales</taxon>
        <taxon>Dictyosteliaceae</taxon>
        <taxon>Dictyostelium</taxon>
    </lineage>
</organism>
<evidence type="ECO:0000250" key="1"/>
<evidence type="ECO:0000255" key="2"/>
<evidence type="ECO:0000255" key="3">
    <source>
        <dbReference type="PROSITE-ProRule" id="PRU00041"/>
    </source>
</evidence>
<evidence type="ECO:0000255" key="4">
    <source>
        <dbReference type="PROSITE-ProRule" id="PRU00577"/>
    </source>
</evidence>
<evidence type="ECO:0000255" key="5">
    <source>
        <dbReference type="PROSITE-ProRule" id="PRU00579"/>
    </source>
</evidence>
<evidence type="ECO:0000255" key="6">
    <source>
        <dbReference type="PROSITE-ProRule" id="PRU00774"/>
    </source>
</evidence>
<evidence type="ECO:0000256" key="7">
    <source>
        <dbReference type="SAM" id="MobiDB-lite"/>
    </source>
</evidence>
<evidence type="ECO:0000269" key="8">
    <source>
    </source>
</evidence>
<evidence type="ECO:0000269" key="9">
    <source>
    </source>
</evidence>
<evidence type="ECO:0000269" key="10">
    <source>
    </source>
</evidence>
<evidence type="ECO:0000305" key="11"/>
<sequence length="1218" mass="135329">MADKLYQIKLDIKKGKNIVGSDGSVCSPYLRVTWGGKKQQKTKVITKSAEPEWNFSCLLEIKKEKNPQKPGLEFELIEHKQFSEKEISSTTYQLPESLILGEACNYSVPMSIATSKGDQKCEILIAITAINFGKDKQDEEKKRHDEIQKKFAQLVEQLATDSKAREGMMKLPYEARAQLVEQHRDKLANEKHPDEYVVLLIKEITRKNIQLAGGLQKSHSASNASLGSLSPVTPRVDDGLSVAELKNISVALRSRGLDWIHQFHKLGATTRLVELLSLYVNKKSHTEESLQKQLECLNCIKNLMNNNVGIGYIFGIKDSFKTIVLCLGSEYEKVNELAIGLLNTICFLPKINGHKLLIELLNYFKEEKKESRRFISIVKSLKSKAGVIETKETLKTKSIYLSFINIIVNTPAEIDLRLALRQEFYWLGIKEILVKLSNYTYDESPELDTQITVFEEEESKDNKEMSERFQEFKGLNLDNVDDVLKTLMDRIRPKGLVDCMREISKDLLLLPIDDDVGIRNWVLASRIIKQISLRDKNIGIDEDILPLENLLLMCEQEAKEVPLKSQIESLKKDAQDLAKKITTQDIELKEKVEIIKKNEELTTKQLEEQINIAKKKDEEINQLKALVEQLKLTQGTAKPDSAAASTSVAPPPPPPPMTGGGAPPPPPPPPPMTGGGGPPPPPPPPPMTGGGPPPPPPPPPMTGGGPPPPPPPPGGGPPPPPPPPGAKAGGPPPPPPPFGKGPPPPPGGFGMKKAAAPPRKEVPVPALKMKGLQWVSLNDKKIQGTIFSKFNLDTSKDINLDYKDIEGVFAAKVIEKKESTAPKKTGPVSIIDPKTSQNLSIFLSQFKGKSYDDICGAISKGDETVFQPNHIDALIGFLPSEDDINNINEFLREEKDITKLGPPEQFSMKIHSVPQVKARLQAMKFKYAYESKKSDLKVDIDNFKQGTQEIKGSEKIPKLLEVILILGNFINGGTARGNAYGFKLNTITKLADTKSTDNKLSLVNYLTRVVIKDFPHLNSFAQDLGHVEAAGRVSLSQVQAEVATLRKEFVQVQKSIETLNSGTGEEAVDPFKVKYEEFCTQTAEDIDLITSSSQQIETDYKDLLAMFGEDSKSEPSEFFGMFTKFMDQYDKATKENEQLSIQAEKIAKREAAKKLKEEEDAKKKQLAEERKQKGETVEVKESVVDDLLDTIASGDAFKNRRRRARKTDQDSTIEPIDL</sequence>
<name>FORA_DICDI</name>
<comment type="function">
    <text evidence="1">Formins play an important role in the nucleation of actin and the formation of linear actin filaments.</text>
</comment>
<comment type="subunit">
    <text evidence="10">Interacts (via GBD/FH3 domain) with activated Rho-GTPases.</text>
</comment>
<comment type="developmental stage">
    <text evidence="9">Expression decreases after the onset of development.</text>
</comment>
<comment type="domain">
    <text evidence="1">The DAD domain regulates activation via by an autoinhibitory interaction with the GBD/FH3 domain. This autoinhibition is released upon competitive binding of an activated GTPase. The release of DAD allows the FH2 domain to then nucleate and elongate nonbranched actin filaments (By similarity).</text>
</comment>
<comment type="disruption phenotype">
    <text evidence="8">No visible phenotype. ForA and forB double null cells also show no phenotype.</text>
</comment>
<comment type="similarity">
    <text evidence="11">Belongs to the formin homology family. Diaphanous subfamily.</text>
</comment>
<feature type="chain" id="PRO_0000363913" description="Formin-A">
    <location>
        <begin position="1"/>
        <end position="1218"/>
    </location>
</feature>
<feature type="domain" description="C2" evidence="3">
    <location>
        <begin position="1"/>
        <end position="108"/>
    </location>
</feature>
<feature type="domain" description="GBD/FH3" evidence="5">
    <location>
        <begin position="139"/>
        <end position="539"/>
    </location>
</feature>
<feature type="domain" description="FH1">
    <location>
        <begin position="652"/>
        <end position="737"/>
    </location>
</feature>
<feature type="domain" description="FH2" evidence="6">
    <location>
        <begin position="759"/>
        <end position="1155"/>
    </location>
</feature>
<feature type="domain" description="DAD" evidence="4">
    <location>
        <begin position="1174"/>
        <end position="1209"/>
    </location>
</feature>
<feature type="region of interest" description="Disordered" evidence="7">
    <location>
        <begin position="634"/>
        <end position="762"/>
    </location>
</feature>
<feature type="region of interest" description="Disordered" evidence="7">
    <location>
        <begin position="1153"/>
        <end position="1179"/>
    </location>
</feature>
<feature type="region of interest" description="Disordered" evidence="7">
    <location>
        <begin position="1198"/>
        <end position="1218"/>
    </location>
</feature>
<feature type="coiled-coil region" evidence="2">
    <location>
        <begin position="563"/>
        <end position="638"/>
    </location>
</feature>
<feature type="coiled-coil region" evidence="2">
    <location>
        <begin position="1034"/>
        <end position="1061"/>
    </location>
</feature>
<feature type="compositionally biased region" description="Pro residues" evidence="7">
    <location>
        <begin position="649"/>
        <end position="747"/>
    </location>
</feature>
<feature type="sequence conflict" description="In Ref. 1; BAC16796." evidence="11" ref="1">
    <original>NKKS</original>
    <variation>QQKD</variation>
    <location>
        <begin position="281"/>
        <end position="284"/>
    </location>
</feature>
<accession>Q54WH2</accession>
<accession>Q8IU42</accession>
<protein>
    <recommendedName>
        <fullName>Formin-A</fullName>
    </recommendedName>
</protein>
<keyword id="KW-0009">Actin-binding</keyword>
<keyword id="KW-0175">Coiled coil</keyword>
<keyword id="KW-1185">Reference proteome</keyword>
<dbReference type="EMBL" id="AB082542">
    <property type="protein sequence ID" value="BAC16796.1"/>
    <property type="molecule type" value="mRNA"/>
</dbReference>
<dbReference type="EMBL" id="AAFI02000032">
    <property type="protein sequence ID" value="EAL67578.1"/>
    <property type="molecule type" value="Genomic_DNA"/>
</dbReference>
<dbReference type="RefSeq" id="XP_641581.1">
    <property type="nucleotide sequence ID" value="XM_636489.1"/>
</dbReference>
<dbReference type="SMR" id="Q54WH2"/>
<dbReference type="FunCoup" id="Q54WH2">
    <property type="interactions" value="1"/>
</dbReference>
<dbReference type="STRING" id="44689.Q54WH2"/>
<dbReference type="PaxDb" id="44689-DDB0214996"/>
<dbReference type="EnsemblProtists" id="EAL67578">
    <property type="protein sequence ID" value="EAL67578"/>
    <property type="gene ID" value="DDB_G0279607"/>
</dbReference>
<dbReference type="GeneID" id="8622155"/>
<dbReference type="KEGG" id="ddi:DDB_G0279607"/>
<dbReference type="dictyBase" id="DDB_G0279607">
    <property type="gene designation" value="forA"/>
</dbReference>
<dbReference type="VEuPathDB" id="AmoebaDB:DDB_G0279607"/>
<dbReference type="eggNOG" id="KOG1922">
    <property type="taxonomic scope" value="Eukaryota"/>
</dbReference>
<dbReference type="HOGENOM" id="CLU_269012_0_0_1"/>
<dbReference type="InParanoid" id="Q54WH2"/>
<dbReference type="OMA" id="IRNDCFI"/>
<dbReference type="PhylomeDB" id="Q54WH2"/>
<dbReference type="PRO" id="PR:Q54WH2"/>
<dbReference type="Proteomes" id="UP000002195">
    <property type="component" value="Chromosome 3"/>
</dbReference>
<dbReference type="GO" id="GO:0015629">
    <property type="term" value="C:actin cytoskeleton"/>
    <property type="evidence" value="ECO:0000318"/>
    <property type="project" value="GO_Central"/>
</dbReference>
<dbReference type="GO" id="GO:0005938">
    <property type="term" value="C:cell cortex"/>
    <property type="evidence" value="ECO:0000314"/>
    <property type="project" value="dictyBase"/>
</dbReference>
<dbReference type="GO" id="GO:0031254">
    <property type="term" value="C:cell trailing edge"/>
    <property type="evidence" value="ECO:0000314"/>
    <property type="project" value="dictyBase"/>
</dbReference>
<dbReference type="GO" id="GO:0032154">
    <property type="term" value="C:cleavage furrow"/>
    <property type="evidence" value="ECO:0000314"/>
    <property type="project" value="dictyBase"/>
</dbReference>
<dbReference type="GO" id="GO:0051015">
    <property type="term" value="F:actin filament binding"/>
    <property type="evidence" value="ECO:0000314"/>
    <property type="project" value="dictyBase"/>
</dbReference>
<dbReference type="GO" id="GO:0035091">
    <property type="term" value="F:phosphatidylinositol binding"/>
    <property type="evidence" value="ECO:0000314"/>
    <property type="project" value="dictyBase"/>
</dbReference>
<dbReference type="GO" id="GO:0005522">
    <property type="term" value="F:profilin binding"/>
    <property type="evidence" value="ECO:0000318"/>
    <property type="project" value="GO_Central"/>
</dbReference>
<dbReference type="GO" id="GO:0031267">
    <property type="term" value="F:small GTPase binding"/>
    <property type="evidence" value="ECO:0007669"/>
    <property type="project" value="InterPro"/>
</dbReference>
<dbReference type="GO" id="GO:0070060">
    <property type="term" value="P:'de novo' actin filament nucleation"/>
    <property type="evidence" value="ECO:0000318"/>
    <property type="project" value="GO_Central"/>
</dbReference>
<dbReference type="GO" id="GO:0030041">
    <property type="term" value="P:actin filament polymerization"/>
    <property type="evidence" value="ECO:0000314"/>
    <property type="project" value="dictyBase"/>
</dbReference>
<dbReference type="GO" id="GO:0045010">
    <property type="term" value="P:actin nucleation"/>
    <property type="evidence" value="ECO:0000314"/>
    <property type="project" value="dictyBase"/>
</dbReference>
<dbReference type="GO" id="GO:0016477">
    <property type="term" value="P:cell migration"/>
    <property type="evidence" value="ECO:0000315"/>
    <property type="project" value="dictyBase"/>
</dbReference>
<dbReference type="GO" id="GO:0030866">
    <property type="term" value="P:cortical actin cytoskeleton organization"/>
    <property type="evidence" value="ECO:0000315"/>
    <property type="project" value="dictyBase"/>
</dbReference>
<dbReference type="GO" id="GO:0000281">
    <property type="term" value="P:mitotic cytokinesis"/>
    <property type="evidence" value="ECO:0000316"/>
    <property type="project" value="dictyBase"/>
</dbReference>
<dbReference type="GO" id="GO:1904171">
    <property type="term" value="P:negative regulation of bleb assembly"/>
    <property type="evidence" value="ECO:0000315"/>
    <property type="project" value="dictyBase"/>
</dbReference>
<dbReference type="GO" id="GO:0030587">
    <property type="term" value="P:sorocarp development"/>
    <property type="evidence" value="ECO:0000316"/>
    <property type="project" value="dictyBase"/>
</dbReference>
<dbReference type="CDD" id="cd00030">
    <property type="entry name" value="C2"/>
    <property type="match status" value="1"/>
</dbReference>
<dbReference type="FunFam" id="1.20.58.2220:FF:000025">
    <property type="entry name" value="Formin-E"/>
    <property type="match status" value="1"/>
</dbReference>
<dbReference type="FunFam" id="1.25.10.10:FF:001504">
    <property type="entry name" value="Formin-E"/>
    <property type="match status" value="1"/>
</dbReference>
<dbReference type="Gene3D" id="2.60.40.150">
    <property type="entry name" value="C2 domain"/>
    <property type="match status" value="1"/>
</dbReference>
<dbReference type="Gene3D" id="1.20.58.2220">
    <property type="entry name" value="Formin, FH2 domain"/>
    <property type="match status" value="1"/>
</dbReference>
<dbReference type="Gene3D" id="1.25.10.10">
    <property type="entry name" value="Leucine-rich Repeat Variant"/>
    <property type="match status" value="1"/>
</dbReference>
<dbReference type="InterPro" id="IPR011989">
    <property type="entry name" value="ARM-like"/>
</dbReference>
<dbReference type="InterPro" id="IPR016024">
    <property type="entry name" value="ARM-type_fold"/>
</dbReference>
<dbReference type="InterPro" id="IPR000008">
    <property type="entry name" value="C2_dom"/>
</dbReference>
<dbReference type="InterPro" id="IPR035892">
    <property type="entry name" value="C2_domain_sf"/>
</dbReference>
<dbReference type="InterPro" id="IPR014767">
    <property type="entry name" value="DAD_dom"/>
</dbReference>
<dbReference type="InterPro" id="IPR015425">
    <property type="entry name" value="FH2_Formin"/>
</dbReference>
<dbReference type="InterPro" id="IPR042201">
    <property type="entry name" value="FH2_Formin_sf"/>
</dbReference>
<dbReference type="InterPro" id="IPR010472">
    <property type="entry name" value="FH3_dom"/>
</dbReference>
<dbReference type="InterPro" id="IPR051425">
    <property type="entry name" value="Formin_Homology"/>
</dbReference>
<dbReference type="InterPro" id="IPR014768">
    <property type="entry name" value="GBD/FH3_dom"/>
</dbReference>
<dbReference type="InterPro" id="IPR010473">
    <property type="entry name" value="GTPase-bd"/>
</dbReference>
<dbReference type="PANTHER" id="PTHR45725">
    <property type="entry name" value="FORMIN HOMOLOGY 2 FAMILY MEMBER"/>
    <property type="match status" value="1"/>
</dbReference>
<dbReference type="PANTHER" id="PTHR45725:SF19">
    <property type="entry name" value="FORMIN-A-RELATED"/>
    <property type="match status" value="1"/>
</dbReference>
<dbReference type="Pfam" id="PF00168">
    <property type="entry name" value="C2"/>
    <property type="match status" value="1"/>
</dbReference>
<dbReference type="Pfam" id="PF06367">
    <property type="entry name" value="Drf_FH3"/>
    <property type="match status" value="1"/>
</dbReference>
<dbReference type="Pfam" id="PF06371">
    <property type="entry name" value="Drf_GBD"/>
    <property type="match status" value="1"/>
</dbReference>
<dbReference type="Pfam" id="PF02181">
    <property type="entry name" value="FH2"/>
    <property type="match status" value="1"/>
</dbReference>
<dbReference type="PRINTS" id="PR01217">
    <property type="entry name" value="PRICHEXTENSN"/>
</dbReference>
<dbReference type="SMART" id="SM00239">
    <property type="entry name" value="C2"/>
    <property type="match status" value="1"/>
</dbReference>
<dbReference type="SMART" id="SM01139">
    <property type="entry name" value="Drf_FH3"/>
    <property type="match status" value="1"/>
</dbReference>
<dbReference type="SMART" id="SM01140">
    <property type="entry name" value="Drf_GBD"/>
    <property type="match status" value="1"/>
</dbReference>
<dbReference type="SMART" id="SM00498">
    <property type="entry name" value="FH2"/>
    <property type="match status" value="1"/>
</dbReference>
<dbReference type="SUPFAM" id="SSF48371">
    <property type="entry name" value="ARM repeat"/>
    <property type="match status" value="1"/>
</dbReference>
<dbReference type="SUPFAM" id="SSF49562">
    <property type="entry name" value="C2 domain (Calcium/lipid-binding domain, CaLB)"/>
    <property type="match status" value="1"/>
</dbReference>
<dbReference type="SUPFAM" id="SSF101447">
    <property type="entry name" value="Formin homology 2 domain (FH2 domain)"/>
    <property type="match status" value="1"/>
</dbReference>
<dbReference type="PROSITE" id="PS50004">
    <property type="entry name" value="C2"/>
    <property type="match status" value="1"/>
</dbReference>
<dbReference type="PROSITE" id="PS51231">
    <property type="entry name" value="DAD"/>
    <property type="match status" value="1"/>
</dbReference>
<dbReference type="PROSITE" id="PS51444">
    <property type="entry name" value="FH2"/>
    <property type="match status" value="1"/>
</dbReference>
<dbReference type="PROSITE" id="PS51232">
    <property type="entry name" value="GBD_FH3"/>
    <property type="match status" value="1"/>
</dbReference>
<reference key="1">
    <citation type="journal article" date="2003" name="J. Cell Sci.">
        <title>ForC, a novel type of formin family protein lacking an FH1 domain, is involved in multicellular development in Dictyostelium discoideum.</title>
        <authorList>
            <person name="Kitayama C."/>
            <person name="Uyeda T.Q.P."/>
        </authorList>
    </citation>
    <scope>NUCLEOTIDE SEQUENCE [MRNA]</scope>
    <scope>DISRUPTION PHENOTYPE</scope>
</reference>
<reference key="2">
    <citation type="journal article" date="2005" name="Nature">
        <title>The genome of the social amoeba Dictyostelium discoideum.</title>
        <authorList>
            <person name="Eichinger L."/>
            <person name="Pachebat J.A."/>
            <person name="Gloeckner G."/>
            <person name="Rajandream M.A."/>
            <person name="Sucgang R."/>
            <person name="Berriman M."/>
            <person name="Song J."/>
            <person name="Olsen R."/>
            <person name="Szafranski K."/>
            <person name="Xu Q."/>
            <person name="Tunggal B."/>
            <person name="Kummerfeld S."/>
            <person name="Madera M."/>
            <person name="Konfortov B.A."/>
            <person name="Rivero F."/>
            <person name="Bankier A.T."/>
            <person name="Lehmann R."/>
            <person name="Hamlin N."/>
            <person name="Davies R."/>
            <person name="Gaudet P."/>
            <person name="Fey P."/>
            <person name="Pilcher K."/>
            <person name="Chen G."/>
            <person name="Saunders D."/>
            <person name="Sodergren E.J."/>
            <person name="Davis P."/>
            <person name="Kerhornou A."/>
            <person name="Nie X."/>
            <person name="Hall N."/>
            <person name="Anjard C."/>
            <person name="Hemphill L."/>
            <person name="Bason N."/>
            <person name="Farbrother P."/>
            <person name="Desany B."/>
            <person name="Just E."/>
            <person name="Morio T."/>
            <person name="Rost R."/>
            <person name="Churcher C.M."/>
            <person name="Cooper J."/>
            <person name="Haydock S."/>
            <person name="van Driessche N."/>
            <person name="Cronin A."/>
            <person name="Goodhead I."/>
            <person name="Muzny D.M."/>
            <person name="Mourier T."/>
            <person name="Pain A."/>
            <person name="Lu M."/>
            <person name="Harper D."/>
            <person name="Lindsay R."/>
            <person name="Hauser H."/>
            <person name="James K.D."/>
            <person name="Quiles M."/>
            <person name="Madan Babu M."/>
            <person name="Saito T."/>
            <person name="Buchrieser C."/>
            <person name="Wardroper A."/>
            <person name="Felder M."/>
            <person name="Thangavelu M."/>
            <person name="Johnson D."/>
            <person name="Knights A."/>
            <person name="Loulseged H."/>
            <person name="Mungall K.L."/>
            <person name="Oliver K."/>
            <person name="Price C."/>
            <person name="Quail M.A."/>
            <person name="Urushihara H."/>
            <person name="Hernandez J."/>
            <person name="Rabbinowitsch E."/>
            <person name="Steffen D."/>
            <person name="Sanders M."/>
            <person name="Ma J."/>
            <person name="Kohara Y."/>
            <person name="Sharp S."/>
            <person name="Simmonds M.N."/>
            <person name="Spiegler S."/>
            <person name="Tivey A."/>
            <person name="Sugano S."/>
            <person name="White B."/>
            <person name="Walker D."/>
            <person name="Woodward J.R."/>
            <person name="Winckler T."/>
            <person name="Tanaka Y."/>
            <person name="Shaulsky G."/>
            <person name="Schleicher M."/>
            <person name="Weinstock G.M."/>
            <person name="Rosenthal A."/>
            <person name="Cox E.C."/>
            <person name="Chisholm R.L."/>
            <person name="Gibbs R.A."/>
            <person name="Loomis W.F."/>
            <person name="Platzer M."/>
            <person name="Kay R.R."/>
            <person name="Williams J.G."/>
            <person name="Dear P.H."/>
            <person name="Noegel A.A."/>
            <person name="Barrell B.G."/>
            <person name="Kuspa A."/>
        </authorList>
    </citation>
    <scope>NUCLEOTIDE SEQUENCE [LARGE SCALE GENOMIC DNA]</scope>
    <source>
        <strain>AX4</strain>
    </source>
</reference>
<reference key="3">
    <citation type="journal article" date="2004" name="Protoplasma">
        <title>Evolutionarily conserved modules in actin nucleation: lessons from Dictyostelium discoideum and plants. Review article.</title>
        <authorList>
            <person name="Cvrckova F."/>
            <person name="Rivero F."/>
            <person name="Bavlnka B."/>
        </authorList>
    </citation>
    <scope>NOMENCLATURE</scope>
</reference>
<reference key="4">
    <citation type="journal article" date="2005" name="BMC Genomics">
        <title>A comparative sequence analysis reveals a common GBD/FH3-FH1-FH2-DAD architecture in formins from Dictyostelium, fungi and metazoa.</title>
        <authorList>
            <person name="Rivero F."/>
            <person name="Muramoto T."/>
            <person name="Meyer A.-K."/>
            <person name="Urushihara H."/>
            <person name="Uyeda T.Q.P."/>
            <person name="Kitayama C."/>
        </authorList>
    </citation>
    <scope>DEVELOPMENTAL STAGE</scope>
</reference>
<reference key="5">
    <citation type="journal article" date="2006" name="Eur. J. Cell Biol.">
        <title>Rho GTPase signaling in Dictyostelium discoideum: insights from the genome.</title>
        <authorList>
            <person name="Vlahou G."/>
            <person name="Rivero F."/>
        </authorList>
    </citation>
    <scope>INTERACTION WITH RHO GTPASE</scope>
</reference>
<gene>
    <name type="primary">forA</name>
    <name type="ORF">DDB_G0279607</name>
</gene>
<proteinExistence type="evidence at protein level"/>